<keyword id="KW-0007">Acetylation</keyword>
<keyword id="KW-0010">Activator</keyword>
<keyword id="KW-0238">DNA-binding</keyword>
<keyword id="KW-0539">Nucleus</keyword>
<keyword id="KW-0597">Phosphoprotein</keyword>
<keyword id="KW-1185">Reference proteome</keyword>
<keyword id="KW-0804">Transcription</keyword>
<keyword id="KW-0805">Transcription regulation</keyword>
<proteinExistence type="evidence at protein level"/>
<evidence type="ECO:0000255" key="1">
    <source>
        <dbReference type="PROSITE-ProRule" id="PRU00505"/>
    </source>
</evidence>
<evidence type="ECO:0000256" key="2">
    <source>
        <dbReference type="SAM" id="MobiDB-lite"/>
    </source>
</evidence>
<evidence type="ECO:0000269" key="3">
    <source>
    </source>
</evidence>
<evidence type="ECO:0000305" key="4"/>
<evidence type="ECO:0007744" key="5">
    <source>
    </source>
</evidence>
<evidence type="ECO:0007744" key="6">
    <source>
    </source>
</evidence>
<sequence>MSLKEDDFGKDNSRNIESYTGRIFDVYIQKDSYSQSALDDMFPEAVVSTAACVKNEAEDNINLIDTHPQFELVNTGLGAKSDDLKSPSAKATFTDKQRKNEVPNISVSNYFPGQSSETSSTTESWTIGCDKWSEKVEEAFLEALRLIMKNGTTKIKIRNANFGRNELISLYIKHKTNEFRTKKQISSHIQVWKKTIQNKIKDSLTLSSKEKELLHLIEHGAEQTTENSNLFYDIFEEIIDSLPSVSDSGSLTPKNLYVSNNSSGLSVHSKLLTPITASNEKKIENFIKTNAASQAKTPLIYAKHIYENIDGYKCVPSKRPLEQLSPTELHQGDRPNKASFSNKKAILESAKKIEIEQRKIINKYQRISRIQEHESNPEFSSNSNSGSEYESEEEVVPRSATVTQLQSRPVPYYKNNGMPYSLSKVRGRPMYPRPAEDAYNANYIQGLPQYQTSYFSQLLLSSPQHYEHSPHQRNFTPSNQSHGNFY</sequence>
<comment type="function">
    <text>TEC1 is involved in the activation of TY1 and TY1-mediated gene expression. It is not involved in mating or sporulation processes.</text>
</comment>
<comment type="interaction">
    <interactant intactId="EBI-19091">
        <id>P18412</id>
    </interactant>
    <interactant intactId="EBI-18264">
        <id>P13574</id>
        <label>STE12</label>
    </interactant>
    <organismsDiffer>false</organismsDiffer>
    <experiments>13</experiments>
</comment>
<comment type="subcellular location">
    <subcellularLocation>
        <location>Nucleus</location>
    </subcellularLocation>
</comment>
<comment type="miscellaneous">
    <text evidence="3">Present with 530 molecules/cell in log phase SD medium.</text>
</comment>
<comment type="similarity">
    <text evidence="4">Belongs to the TEC1 family.</text>
</comment>
<feature type="initiator methionine" description="Removed" evidence="6">
    <location>
        <position position="1"/>
    </location>
</feature>
<feature type="chain" id="PRO_0000205941" description="Ty transcription activator TEC1">
    <location>
        <begin position="2"/>
        <end position="486"/>
    </location>
</feature>
<feature type="DNA-binding region" description="TEA" evidence="1">
    <location>
        <begin position="125"/>
        <end position="199"/>
    </location>
</feature>
<feature type="region of interest" description="Disordered" evidence="2">
    <location>
        <begin position="372"/>
        <end position="410"/>
    </location>
</feature>
<feature type="region of interest" description="Disordered" evidence="2">
    <location>
        <begin position="465"/>
        <end position="486"/>
    </location>
</feature>
<feature type="compositionally biased region" description="Low complexity" evidence="2">
    <location>
        <begin position="377"/>
        <end position="388"/>
    </location>
</feature>
<feature type="compositionally biased region" description="Polar residues" evidence="2">
    <location>
        <begin position="472"/>
        <end position="486"/>
    </location>
</feature>
<feature type="modified residue" description="N-acetylserine" evidence="6">
    <location>
        <position position="2"/>
    </location>
</feature>
<feature type="modified residue" description="Phosphoserine" evidence="5">
    <location>
        <position position="325"/>
    </location>
</feature>
<reference key="1">
    <citation type="journal article" date="1990" name="Mol. Cell. Biol.">
        <title>TEC1, a gene involved in the activation of Ty1 and Ty1-mediated gene expression in Saccharomyces cerevisiae: cloning and molecular analysis.</title>
        <authorList>
            <person name="Laloux I."/>
            <person name="Dubois E."/>
            <person name="Dewerchin M."/>
            <person name="Jacobs E."/>
        </authorList>
    </citation>
    <scope>NUCLEOTIDE SEQUENCE [GENOMIC DNA]</scope>
</reference>
<reference key="2">
    <citation type="journal article" date="1994" name="EMBO J.">
        <title>Complete DNA sequence of yeast chromosome II.</title>
        <authorList>
            <person name="Feldmann H."/>
            <person name="Aigle M."/>
            <person name="Aljinovic G."/>
            <person name="Andre B."/>
            <person name="Baclet M.C."/>
            <person name="Barthe C."/>
            <person name="Baur A."/>
            <person name="Becam A.-M."/>
            <person name="Biteau N."/>
            <person name="Boles E."/>
            <person name="Brandt T."/>
            <person name="Brendel M."/>
            <person name="Brueckner M."/>
            <person name="Bussereau F."/>
            <person name="Christiansen C."/>
            <person name="Contreras R."/>
            <person name="Crouzet M."/>
            <person name="Cziepluch C."/>
            <person name="Demolis N."/>
            <person name="Delaveau T."/>
            <person name="Doignon F."/>
            <person name="Domdey H."/>
            <person name="Duesterhus S."/>
            <person name="Dubois E."/>
            <person name="Dujon B."/>
            <person name="El Bakkoury M."/>
            <person name="Entian K.-D."/>
            <person name="Feuermann M."/>
            <person name="Fiers W."/>
            <person name="Fobo G.M."/>
            <person name="Fritz C."/>
            <person name="Gassenhuber J."/>
            <person name="Glansdorff N."/>
            <person name="Goffeau A."/>
            <person name="Grivell L.A."/>
            <person name="de Haan M."/>
            <person name="Hein C."/>
            <person name="Herbert C.J."/>
            <person name="Hollenberg C.P."/>
            <person name="Holmstroem K."/>
            <person name="Jacq C."/>
            <person name="Jacquet M."/>
            <person name="Jauniaux J.-C."/>
            <person name="Jonniaux J.-L."/>
            <person name="Kallesoee T."/>
            <person name="Kiesau P."/>
            <person name="Kirchrath L."/>
            <person name="Koetter P."/>
            <person name="Korol S."/>
            <person name="Liebl S."/>
            <person name="Logghe M."/>
            <person name="Lohan A.J.E."/>
            <person name="Louis E.J."/>
            <person name="Li Z.Y."/>
            <person name="Maat M.J."/>
            <person name="Mallet L."/>
            <person name="Mannhaupt G."/>
            <person name="Messenguy F."/>
            <person name="Miosga T."/>
            <person name="Molemans F."/>
            <person name="Mueller S."/>
            <person name="Nasr F."/>
            <person name="Obermaier B."/>
            <person name="Perea J."/>
            <person name="Pierard A."/>
            <person name="Piravandi E."/>
            <person name="Pohl F.M."/>
            <person name="Pohl T.M."/>
            <person name="Potier S."/>
            <person name="Proft M."/>
            <person name="Purnelle B."/>
            <person name="Ramezani Rad M."/>
            <person name="Rieger M."/>
            <person name="Rose M."/>
            <person name="Schaaff-Gerstenschlaeger I."/>
            <person name="Scherens B."/>
            <person name="Schwarzlose C."/>
            <person name="Skala J."/>
            <person name="Slonimski P.P."/>
            <person name="Smits P.H.M."/>
            <person name="Souciet J.-L."/>
            <person name="Steensma H.Y."/>
            <person name="Stucka R."/>
            <person name="Urrestarazu L.A."/>
            <person name="van der Aart Q.J.M."/>
            <person name="Van Dyck L."/>
            <person name="Vassarotti A."/>
            <person name="Vetter I."/>
            <person name="Vierendeels F."/>
            <person name="Vissers S."/>
            <person name="Wagner G."/>
            <person name="de Wergifosse P."/>
            <person name="Wolfe K.H."/>
            <person name="Zagulski M."/>
            <person name="Zimmermann F.K."/>
            <person name="Mewes H.-W."/>
            <person name="Kleine K."/>
        </authorList>
    </citation>
    <scope>NUCLEOTIDE SEQUENCE [LARGE SCALE GENOMIC DNA]</scope>
    <source>
        <strain>ATCC 204508 / S288c</strain>
    </source>
</reference>
<reference key="3">
    <citation type="journal article" date="2014" name="G3 (Bethesda)">
        <title>The reference genome sequence of Saccharomyces cerevisiae: Then and now.</title>
        <authorList>
            <person name="Engel S.R."/>
            <person name="Dietrich F.S."/>
            <person name="Fisk D.G."/>
            <person name="Binkley G."/>
            <person name="Balakrishnan R."/>
            <person name="Costanzo M.C."/>
            <person name="Dwight S.S."/>
            <person name="Hitz B.C."/>
            <person name="Karra K."/>
            <person name="Nash R.S."/>
            <person name="Weng S."/>
            <person name="Wong E.D."/>
            <person name="Lloyd P."/>
            <person name="Skrzypek M.S."/>
            <person name="Miyasato S.R."/>
            <person name="Simison M."/>
            <person name="Cherry J.M."/>
        </authorList>
    </citation>
    <scope>GENOME REANNOTATION</scope>
    <source>
        <strain>ATCC 204508 / S288c</strain>
    </source>
</reference>
<reference key="4">
    <citation type="journal article" date="1991" name="Cell">
        <title>The TEA domain: a novel, highly conserved DNA-binding motif.</title>
        <authorList>
            <person name="Buerglin T.R."/>
        </authorList>
    </citation>
    <scope>DOMAIN TEA</scope>
</reference>
<reference key="5">
    <citation type="journal article" date="2003" name="Nature">
        <title>Global analysis of protein expression in yeast.</title>
        <authorList>
            <person name="Ghaemmaghami S."/>
            <person name="Huh W.-K."/>
            <person name="Bower K."/>
            <person name="Howson R.W."/>
            <person name="Belle A."/>
            <person name="Dephoure N."/>
            <person name="O'Shea E.K."/>
            <person name="Weissman J.S."/>
        </authorList>
    </citation>
    <scope>LEVEL OF PROTEIN EXPRESSION [LARGE SCALE ANALYSIS]</scope>
</reference>
<reference key="6">
    <citation type="journal article" date="2007" name="Proc. Natl. Acad. Sci. U.S.A.">
        <title>Analysis of phosphorylation sites on proteins from Saccharomyces cerevisiae by electron transfer dissociation (ETD) mass spectrometry.</title>
        <authorList>
            <person name="Chi A."/>
            <person name="Huttenhower C."/>
            <person name="Geer L.Y."/>
            <person name="Coon J.J."/>
            <person name="Syka J.E.P."/>
            <person name="Bai D.L."/>
            <person name="Shabanowitz J."/>
            <person name="Burke D.J."/>
            <person name="Troyanskaya O.G."/>
            <person name="Hunt D.F."/>
        </authorList>
    </citation>
    <scope>PHOSPHORYLATION [LARGE SCALE ANALYSIS] AT SER-325</scope>
    <scope>IDENTIFICATION BY MASS SPECTROMETRY [LARGE SCALE ANALYSIS]</scope>
</reference>
<reference key="7">
    <citation type="journal article" date="2012" name="Proc. Natl. Acad. Sci. U.S.A.">
        <title>N-terminal acetylome analyses and functional insights of the N-terminal acetyltransferase NatB.</title>
        <authorList>
            <person name="Van Damme P."/>
            <person name="Lasa M."/>
            <person name="Polevoda B."/>
            <person name="Gazquez C."/>
            <person name="Elosegui-Artola A."/>
            <person name="Kim D.S."/>
            <person name="De Juan-Pardo E."/>
            <person name="Demeyer K."/>
            <person name="Hole K."/>
            <person name="Larrea E."/>
            <person name="Timmerman E."/>
            <person name="Prieto J."/>
            <person name="Arnesen T."/>
            <person name="Sherman F."/>
            <person name="Gevaert K."/>
            <person name="Aldabe R."/>
        </authorList>
    </citation>
    <scope>ACETYLATION [LARGE SCALE ANALYSIS] AT SER-2</scope>
    <scope>CLEAVAGE OF INITIATOR METHIONINE [LARGE SCALE ANALYSIS]</scope>
    <scope>IDENTIFICATION BY MASS SPECTROMETRY [LARGE SCALE ANALYSIS]</scope>
</reference>
<dbReference type="EMBL" id="M32797">
    <property type="protein sequence ID" value="AAA35141.1"/>
    <property type="molecule type" value="Genomic_DNA"/>
</dbReference>
<dbReference type="EMBL" id="Z35952">
    <property type="protein sequence ID" value="CAA85028.1"/>
    <property type="molecule type" value="Genomic_DNA"/>
</dbReference>
<dbReference type="EMBL" id="BK006936">
    <property type="protein sequence ID" value="DAA07202.1"/>
    <property type="molecule type" value="Genomic_DNA"/>
</dbReference>
<dbReference type="PIR" id="A35667">
    <property type="entry name" value="A35667"/>
</dbReference>
<dbReference type="RefSeq" id="NP_009639.3">
    <property type="nucleotide sequence ID" value="NM_001178431.3"/>
</dbReference>
<dbReference type="SMR" id="P18412"/>
<dbReference type="BioGRID" id="32787">
    <property type="interactions" value="136"/>
</dbReference>
<dbReference type="ComplexPortal" id="CPX-576">
    <property type="entry name" value="Tec1/Ste12/Dig1 transcription regulation complex"/>
</dbReference>
<dbReference type="DIP" id="DIP-6311N"/>
<dbReference type="FunCoup" id="P18412">
    <property type="interactions" value="3531"/>
</dbReference>
<dbReference type="IntAct" id="P18412">
    <property type="interactions" value="13"/>
</dbReference>
<dbReference type="MINT" id="P18412"/>
<dbReference type="STRING" id="4932.YBR083W"/>
<dbReference type="iPTMnet" id="P18412"/>
<dbReference type="PaxDb" id="4932-YBR083W"/>
<dbReference type="PeptideAtlas" id="P18412"/>
<dbReference type="EnsemblFungi" id="YBR083W_mRNA">
    <property type="protein sequence ID" value="YBR083W"/>
    <property type="gene ID" value="YBR083W"/>
</dbReference>
<dbReference type="GeneID" id="852377"/>
<dbReference type="KEGG" id="sce:YBR083W"/>
<dbReference type="AGR" id="SGD:S000000287"/>
<dbReference type="SGD" id="S000000287">
    <property type="gene designation" value="TEC1"/>
</dbReference>
<dbReference type="VEuPathDB" id="FungiDB:YBR083W"/>
<dbReference type="eggNOG" id="KOG3841">
    <property type="taxonomic scope" value="Eukaryota"/>
</dbReference>
<dbReference type="GeneTree" id="ENSGT00950000182956"/>
<dbReference type="HOGENOM" id="CLU_043980_0_0_1"/>
<dbReference type="InParanoid" id="P18412"/>
<dbReference type="OMA" id="HKTNEFR"/>
<dbReference type="OrthoDB" id="10006572at2759"/>
<dbReference type="BioCyc" id="YEAST:G3O-29051-MONOMER"/>
<dbReference type="BioGRID-ORCS" id="852377">
    <property type="hits" value="1 hit in 13 CRISPR screens"/>
</dbReference>
<dbReference type="PRO" id="PR:P18412"/>
<dbReference type="Proteomes" id="UP000002311">
    <property type="component" value="Chromosome II"/>
</dbReference>
<dbReference type="RNAct" id="P18412">
    <property type="molecule type" value="protein"/>
</dbReference>
<dbReference type="GO" id="GO:0005634">
    <property type="term" value="C:nucleus"/>
    <property type="evidence" value="ECO:0000314"/>
    <property type="project" value="SGD"/>
</dbReference>
<dbReference type="GO" id="GO:1990527">
    <property type="term" value="C:Tec1p-Ste12p-Dig1p complex"/>
    <property type="evidence" value="ECO:0000314"/>
    <property type="project" value="SGD"/>
</dbReference>
<dbReference type="GO" id="GO:0005667">
    <property type="term" value="C:transcription regulator complex"/>
    <property type="evidence" value="ECO:0000318"/>
    <property type="project" value="GO_Central"/>
</dbReference>
<dbReference type="GO" id="GO:0001228">
    <property type="term" value="F:DNA-binding transcription activator activity, RNA polymerase II-specific"/>
    <property type="evidence" value="ECO:0000314"/>
    <property type="project" value="SGD"/>
</dbReference>
<dbReference type="GO" id="GO:0003700">
    <property type="term" value="F:DNA-binding transcription factor activity"/>
    <property type="evidence" value="ECO:0000314"/>
    <property type="project" value="GO_Central"/>
</dbReference>
<dbReference type="GO" id="GO:0000981">
    <property type="term" value="F:DNA-binding transcription factor activity, RNA polymerase II-specific"/>
    <property type="evidence" value="ECO:0000318"/>
    <property type="project" value="GO_Central"/>
</dbReference>
<dbReference type="GO" id="GO:0000978">
    <property type="term" value="F:RNA polymerase II cis-regulatory region sequence-specific DNA binding"/>
    <property type="evidence" value="ECO:0000314"/>
    <property type="project" value="SGD"/>
</dbReference>
<dbReference type="GO" id="GO:0043565">
    <property type="term" value="F:sequence-specific DNA binding"/>
    <property type="evidence" value="ECO:0007005"/>
    <property type="project" value="SGD"/>
</dbReference>
<dbReference type="GO" id="GO:0033554">
    <property type="term" value="P:cellular response to stress"/>
    <property type="evidence" value="ECO:0000314"/>
    <property type="project" value="SGD"/>
</dbReference>
<dbReference type="GO" id="GO:0001403">
    <property type="term" value="P:invasive growth in response to glucose limitation"/>
    <property type="evidence" value="ECO:0000315"/>
    <property type="project" value="SGD"/>
</dbReference>
<dbReference type="GO" id="GO:0000122">
    <property type="term" value="P:negative regulation of transcription by RNA polymerase II"/>
    <property type="evidence" value="ECO:0000303"/>
    <property type="project" value="ComplexPortal"/>
</dbReference>
<dbReference type="GO" id="GO:0045893">
    <property type="term" value="P:positive regulation of DNA-templated transcription"/>
    <property type="evidence" value="ECO:0000314"/>
    <property type="project" value="GO_Central"/>
</dbReference>
<dbReference type="GO" id="GO:2000222">
    <property type="term" value="P:positive regulation of pseudohyphal growth"/>
    <property type="evidence" value="ECO:0000314"/>
    <property type="project" value="SGD"/>
</dbReference>
<dbReference type="GO" id="GO:0045944">
    <property type="term" value="P:positive regulation of transcription by RNA polymerase II"/>
    <property type="evidence" value="ECO:0000314"/>
    <property type="project" value="SGD"/>
</dbReference>
<dbReference type="GO" id="GO:0007124">
    <property type="term" value="P:pseudohyphal growth"/>
    <property type="evidence" value="ECO:0000315"/>
    <property type="project" value="SGD"/>
</dbReference>
<dbReference type="GO" id="GO:0010570">
    <property type="term" value="P:regulation of filamentous growth"/>
    <property type="evidence" value="ECO:0000303"/>
    <property type="project" value="ComplexPortal"/>
</dbReference>
<dbReference type="GO" id="GO:0006357">
    <property type="term" value="P:regulation of transcription by RNA polymerase II"/>
    <property type="evidence" value="ECO:0000318"/>
    <property type="project" value="GO_Central"/>
</dbReference>
<dbReference type="Gene3D" id="6.10.20.40">
    <property type="entry name" value="TEA/ATTS domain"/>
    <property type="match status" value="1"/>
</dbReference>
<dbReference type="InterPro" id="IPR000818">
    <property type="entry name" value="TEA/ATTS_dom"/>
</dbReference>
<dbReference type="InterPro" id="IPR038096">
    <property type="entry name" value="TEA/ATTS_sf"/>
</dbReference>
<dbReference type="InterPro" id="IPR050937">
    <property type="entry name" value="TEC1_TEAD_TF"/>
</dbReference>
<dbReference type="PANTHER" id="PTHR11834:SF0">
    <property type="entry name" value="PROTEIN SCALLOPED"/>
    <property type="match status" value="1"/>
</dbReference>
<dbReference type="PANTHER" id="PTHR11834">
    <property type="entry name" value="TRANSCRIPTIONAL ENHANCER FACTOR TEF RELATED"/>
    <property type="match status" value="1"/>
</dbReference>
<dbReference type="Pfam" id="PF01285">
    <property type="entry name" value="TEA"/>
    <property type="match status" value="1"/>
</dbReference>
<dbReference type="PRINTS" id="PR00065">
    <property type="entry name" value="TEADOMAIN"/>
</dbReference>
<dbReference type="SMART" id="SM00426">
    <property type="entry name" value="TEA"/>
    <property type="match status" value="1"/>
</dbReference>
<dbReference type="PROSITE" id="PS00554">
    <property type="entry name" value="TEA_1"/>
    <property type="match status" value="1"/>
</dbReference>
<dbReference type="PROSITE" id="PS51088">
    <property type="entry name" value="TEA_2"/>
    <property type="match status" value="1"/>
</dbReference>
<name>TEC1_YEAST</name>
<accession>P18412</accession>
<accession>D6VQ82</accession>
<protein>
    <recommendedName>
        <fullName>Ty transcription activator TEC1</fullName>
    </recommendedName>
</protein>
<organism>
    <name type="scientific">Saccharomyces cerevisiae (strain ATCC 204508 / S288c)</name>
    <name type="common">Baker's yeast</name>
    <dbReference type="NCBI Taxonomy" id="559292"/>
    <lineage>
        <taxon>Eukaryota</taxon>
        <taxon>Fungi</taxon>
        <taxon>Dikarya</taxon>
        <taxon>Ascomycota</taxon>
        <taxon>Saccharomycotina</taxon>
        <taxon>Saccharomycetes</taxon>
        <taxon>Saccharomycetales</taxon>
        <taxon>Saccharomycetaceae</taxon>
        <taxon>Saccharomyces</taxon>
    </lineage>
</organism>
<gene>
    <name type="primary">TEC1</name>
    <name type="synonym">ROC1</name>
    <name type="ordered locus">YBR083W</name>
    <name type="ORF">YBR0750</name>
</gene>